<name>DRE2_DROSI</name>
<evidence type="ECO:0000255" key="1">
    <source>
        <dbReference type="HAMAP-Rule" id="MF_03115"/>
    </source>
</evidence>
<keyword id="KW-0001">2Fe-2S</keyword>
<keyword id="KW-0004">4Fe-4S</keyword>
<keyword id="KW-0963">Cytoplasm</keyword>
<keyword id="KW-0408">Iron</keyword>
<keyword id="KW-0411">Iron-sulfur</keyword>
<keyword id="KW-0479">Metal-binding</keyword>
<keyword id="KW-0496">Mitochondrion</keyword>
<keyword id="KW-1185">Reference proteome</keyword>
<sequence length="248" mass="27116">MENFKGLQKSLYIWTDSADLDKRVEQLKAATGGDVALENVHRLSFSSYANSSFDLIVIECAQLTDSYVKLLHMLKPSGKLHLVSFIGPAASLLQEIKLSGFINCREDSPDALTAEKPGYETGSSARLSFAKKNANAVNVWKISGDDEELIDEEELLDEEDKQKPDPAGLRVCSTTGKRKACKNCSCGLAEELETEKQSQKATENAKSSCGNCYLGDAFRCSTCPYLGMPAFKPGEKVQLADNLLKSDI</sequence>
<accession>B4Q5Z1</accession>
<feature type="chain" id="PRO_0000392322" description="Anamorsin homolog">
    <location>
        <begin position="1"/>
        <end position="248"/>
    </location>
</feature>
<feature type="region of interest" description="N-terminal SAM-like domain" evidence="1">
    <location>
        <begin position="4"/>
        <end position="129"/>
    </location>
</feature>
<feature type="region of interest" description="Linker" evidence="1">
    <location>
        <begin position="130"/>
        <end position="161"/>
    </location>
</feature>
<feature type="region of interest" description="Fe-S binding site A" evidence="1">
    <location>
        <begin position="172"/>
        <end position="186"/>
    </location>
</feature>
<feature type="region of interest" description="Fe-S binding site B" evidence="1">
    <location>
        <begin position="209"/>
        <end position="223"/>
    </location>
</feature>
<feature type="short sequence motif" description="Cx2C motif 1" evidence="1">
    <location>
        <begin position="209"/>
        <end position="212"/>
    </location>
</feature>
<feature type="short sequence motif" description="Cx2C motif 2" evidence="1">
    <location>
        <begin position="220"/>
        <end position="223"/>
    </location>
</feature>
<feature type="binding site" evidence="1">
    <location>
        <position position="172"/>
    </location>
    <ligand>
        <name>[2Fe-2S] cluster</name>
        <dbReference type="ChEBI" id="CHEBI:190135"/>
    </ligand>
</feature>
<feature type="binding site" evidence="1">
    <location>
        <position position="181"/>
    </location>
    <ligand>
        <name>[2Fe-2S] cluster</name>
        <dbReference type="ChEBI" id="CHEBI:190135"/>
    </ligand>
</feature>
<feature type="binding site" evidence="1">
    <location>
        <position position="184"/>
    </location>
    <ligand>
        <name>[2Fe-2S] cluster</name>
        <dbReference type="ChEBI" id="CHEBI:190135"/>
    </ligand>
</feature>
<feature type="binding site" evidence="1">
    <location>
        <position position="186"/>
    </location>
    <ligand>
        <name>[2Fe-2S] cluster</name>
        <dbReference type="ChEBI" id="CHEBI:190135"/>
    </ligand>
</feature>
<feature type="binding site" evidence="1">
    <location>
        <position position="209"/>
    </location>
    <ligand>
        <name>[4Fe-4S] cluster</name>
        <dbReference type="ChEBI" id="CHEBI:49883"/>
    </ligand>
</feature>
<feature type="binding site" evidence="1">
    <location>
        <position position="212"/>
    </location>
    <ligand>
        <name>[4Fe-4S] cluster</name>
        <dbReference type="ChEBI" id="CHEBI:49883"/>
    </ligand>
</feature>
<feature type="binding site" evidence="1">
    <location>
        <position position="220"/>
    </location>
    <ligand>
        <name>[4Fe-4S] cluster</name>
        <dbReference type="ChEBI" id="CHEBI:49883"/>
    </ligand>
</feature>
<feature type="binding site" evidence="1">
    <location>
        <position position="223"/>
    </location>
    <ligand>
        <name>[4Fe-4S] cluster</name>
        <dbReference type="ChEBI" id="CHEBI:49883"/>
    </ligand>
</feature>
<dbReference type="EMBL" id="CM000361">
    <property type="protein sequence ID" value="EDX05094.1"/>
    <property type="molecule type" value="Genomic_DNA"/>
</dbReference>
<dbReference type="STRING" id="7240.B4Q5Z1"/>
<dbReference type="EnsemblMetazoa" id="FBtr0221884">
    <property type="protein sequence ID" value="FBpp0220376"/>
    <property type="gene ID" value="FBgn0193389"/>
</dbReference>
<dbReference type="EnsemblMetazoa" id="XM_002079473.4">
    <property type="protein sequence ID" value="XP_002079509.1"/>
    <property type="gene ID" value="LOC6732388"/>
</dbReference>
<dbReference type="GeneID" id="6732388"/>
<dbReference type="CTD" id="57019"/>
<dbReference type="HOGENOM" id="CLU_064393_1_0_1"/>
<dbReference type="OMA" id="GFINCRE"/>
<dbReference type="OrthoDB" id="311633at2759"/>
<dbReference type="PhylomeDB" id="B4Q5Z1"/>
<dbReference type="Proteomes" id="UP000000304">
    <property type="component" value="Chromosome 2L"/>
</dbReference>
<dbReference type="Bgee" id="FBgn0193389">
    <property type="expression patterns" value="Expressed in embryo and 3 other cell types or tissues"/>
</dbReference>
<dbReference type="GO" id="GO:0005758">
    <property type="term" value="C:mitochondrial intermembrane space"/>
    <property type="evidence" value="ECO:0007669"/>
    <property type="project" value="UniProtKB-SubCell"/>
</dbReference>
<dbReference type="GO" id="GO:0051537">
    <property type="term" value="F:2 iron, 2 sulfur cluster binding"/>
    <property type="evidence" value="ECO:0007669"/>
    <property type="project" value="UniProtKB-UniRule"/>
</dbReference>
<dbReference type="GO" id="GO:0051539">
    <property type="term" value="F:4 iron, 4 sulfur cluster binding"/>
    <property type="evidence" value="ECO:0007669"/>
    <property type="project" value="UniProtKB-KW"/>
</dbReference>
<dbReference type="GO" id="GO:0009055">
    <property type="term" value="F:electron transfer activity"/>
    <property type="evidence" value="ECO:0007669"/>
    <property type="project" value="UniProtKB-UniRule"/>
</dbReference>
<dbReference type="GO" id="GO:0046872">
    <property type="term" value="F:metal ion binding"/>
    <property type="evidence" value="ECO:0007669"/>
    <property type="project" value="UniProtKB-KW"/>
</dbReference>
<dbReference type="GO" id="GO:0016226">
    <property type="term" value="P:iron-sulfur cluster assembly"/>
    <property type="evidence" value="ECO:0007669"/>
    <property type="project" value="UniProtKB-UniRule"/>
</dbReference>
<dbReference type="FunFam" id="3.40.50.150:FF:000545">
    <property type="entry name" value="Anamorsin homolog"/>
    <property type="match status" value="1"/>
</dbReference>
<dbReference type="Gene3D" id="3.40.50.150">
    <property type="entry name" value="Vaccinia Virus protein VP39"/>
    <property type="match status" value="1"/>
</dbReference>
<dbReference type="HAMAP" id="MF_03115">
    <property type="entry name" value="Anamorsin"/>
    <property type="match status" value="1"/>
</dbReference>
<dbReference type="InterPro" id="IPR007785">
    <property type="entry name" value="Anamorsin"/>
</dbReference>
<dbReference type="InterPro" id="IPR049011">
    <property type="entry name" value="Anamorsin_N_metazoan"/>
</dbReference>
<dbReference type="InterPro" id="IPR046408">
    <property type="entry name" value="CIAPIN1"/>
</dbReference>
<dbReference type="InterPro" id="IPR029063">
    <property type="entry name" value="SAM-dependent_MTases_sf"/>
</dbReference>
<dbReference type="PANTHER" id="PTHR13273">
    <property type="entry name" value="ANAMORSIN"/>
    <property type="match status" value="1"/>
</dbReference>
<dbReference type="PANTHER" id="PTHR13273:SF14">
    <property type="entry name" value="ANAMORSIN"/>
    <property type="match status" value="1"/>
</dbReference>
<dbReference type="Pfam" id="PF20922">
    <property type="entry name" value="Anamorsin_N"/>
    <property type="match status" value="1"/>
</dbReference>
<dbReference type="Pfam" id="PF05093">
    <property type="entry name" value="CIAPIN1"/>
    <property type="match status" value="2"/>
</dbReference>
<comment type="function">
    <text evidence="1">Component of the cytosolic iron-sulfur (Fe-S) protein assembly (CIA) machinery. Required for the maturation of extramitochondrial Fe-S proteins. Part of an electron transfer chain functioning in an early step of cytosolic Fe-S biogenesis, facilitating the de novo assembly of a [4Fe-4S] cluster on the cytosolic Fe-S scaffold complex. Electrons are transferred from NADPH via a FAD- and FMN-containing diflavin oxidoreductase. Together with the diflavin oxidoreductase, also required for the assembly of the diferric tyrosyl radical cofactor of ribonucleotide reductase (RNR), probably by providing electrons for reduction during radical cofactor maturation in the catalytic small subunit.</text>
</comment>
<comment type="cofactor">
    <cofactor evidence="1">
        <name>[2Fe-2S] cluster</name>
        <dbReference type="ChEBI" id="CHEBI:190135"/>
    </cofactor>
</comment>
<comment type="cofactor">
    <cofactor evidence="1">
        <name>[4Fe-4S] cluster</name>
        <dbReference type="ChEBI" id="CHEBI:49883"/>
    </cofactor>
</comment>
<comment type="subunit">
    <text evidence="1">Monomer.</text>
</comment>
<comment type="subcellular location">
    <subcellularLocation>
        <location evidence="1">Cytoplasm</location>
    </subcellularLocation>
    <subcellularLocation>
        <location evidence="1">Mitochondrion intermembrane space</location>
    </subcellularLocation>
</comment>
<comment type="domain">
    <text evidence="1">The C-terminal domain binds 2 Fe-S clusters but is otherwise mostly in an intrinsically disordered conformation.</text>
</comment>
<comment type="domain">
    <text evidence="1">The N-terminal domain has structural similarity with S-adenosyl-L-methionine-dependent methyltransferases, but does not bind S-adenosyl-L-methionine. It is required for correct assembly of the 2 Fe-S clusters.</text>
</comment>
<comment type="domain">
    <text evidence="1">The twin Cx2C motifs are involved in the recognition by the mitochondrial MIA40-ERV1 disulfide relay system. The formation of 2 disulfide bonds in the Cx2C motifs through dithiol/disulfide exchange reactions effectively traps the protein in the mitochondrial intermembrane space.</text>
</comment>
<comment type="similarity">
    <text evidence="1">Belongs to the anamorsin family.</text>
</comment>
<reference key="1">
    <citation type="journal article" date="2007" name="Nature">
        <title>Evolution of genes and genomes on the Drosophila phylogeny.</title>
        <authorList>
            <consortium name="Drosophila 12 genomes consortium"/>
        </authorList>
    </citation>
    <scope>NUCLEOTIDE SEQUENCE [LARGE SCALE GENOMIC DNA]</scope>
</reference>
<organism>
    <name type="scientific">Drosophila simulans</name>
    <name type="common">Fruit fly</name>
    <dbReference type="NCBI Taxonomy" id="7240"/>
    <lineage>
        <taxon>Eukaryota</taxon>
        <taxon>Metazoa</taxon>
        <taxon>Ecdysozoa</taxon>
        <taxon>Arthropoda</taxon>
        <taxon>Hexapoda</taxon>
        <taxon>Insecta</taxon>
        <taxon>Pterygota</taxon>
        <taxon>Neoptera</taxon>
        <taxon>Endopterygota</taxon>
        <taxon>Diptera</taxon>
        <taxon>Brachycera</taxon>
        <taxon>Muscomorpha</taxon>
        <taxon>Ephydroidea</taxon>
        <taxon>Drosophilidae</taxon>
        <taxon>Drosophila</taxon>
        <taxon>Sophophora</taxon>
    </lineage>
</organism>
<gene>
    <name evidence="1" type="primary">CIAPIN1</name>
    <name evidence="1" type="synonym">l(2)35Bg</name>
    <name type="ORF">GD21974</name>
</gene>
<protein>
    <recommendedName>
        <fullName evidence="1">Anamorsin homolog</fullName>
    </recommendedName>
    <alternativeName>
        <fullName evidence="1">Fe-S cluster assembly protein DRE2 homolog</fullName>
    </alternativeName>
</protein>
<proteinExistence type="inferred from homology"/>